<comment type="similarity">
    <text evidence="1">Belongs to the UPF0260 family.</text>
</comment>
<accession>B4TXY1</accession>
<gene>
    <name evidence="1" type="primary">ycgN</name>
    <name type="ordered locus">SeSA_A1953</name>
</gene>
<reference key="1">
    <citation type="journal article" date="2011" name="J. Bacteriol.">
        <title>Comparative genomics of 28 Salmonella enterica isolates: evidence for CRISPR-mediated adaptive sublineage evolution.</title>
        <authorList>
            <person name="Fricke W.F."/>
            <person name="Mammel M.K."/>
            <person name="McDermott P.F."/>
            <person name="Tartera C."/>
            <person name="White D.G."/>
            <person name="Leclerc J.E."/>
            <person name="Ravel J."/>
            <person name="Cebula T.A."/>
        </authorList>
    </citation>
    <scope>NUCLEOTIDE SEQUENCE [LARGE SCALE GENOMIC DNA]</scope>
    <source>
        <strain>CVM19633</strain>
    </source>
</reference>
<sequence length="153" mass="18010">MADTLMSDTPFWQRKTLDEMTDAEWESLCDGCGQCCLHKLMDEDTDEIYFTNVACRQLNIKTCQCRHYERRFEFEPDCIKLTRENLPDFEWLPMTCAYRLLAEGKPLPTWHPLLTGSKAAMHGERISVRHIAVKESEVRDWQDHILNKPSWAE</sequence>
<evidence type="ECO:0000255" key="1">
    <source>
        <dbReference type="HAMAP-Rule" id="MF_00676"/>
    </source>
</evidence>
<protein>
    <recommendedName>
        <fullName evidence="1">UPF0260 protein YcgN</fullName>
    </recommendedName>
</protein>
<dbReference type="EMBL" id="CP001127">
    <property type="protein sequence ID" value="ACF89058.1"/>
    <property type="molecule type" value="Genomic_DNA"/>
</dbReference>
<dbReference type="SMR" id="B4TXY1"/>
<dbReference type="KEGG" id="sew:SeSA_A1953"/>
<dbReference type="HOGENOM" id="CLU_109769_0_1_6"/>
<dbReference type="Proteomes" id="UP000001865">
    <property type="component" value="Chromosome"/>
</dbReference>
<dbReference type="HAMAP" id="MF_00676">
    <property type="entry name" value="UPF0260"/>
    <property type="match status" value="1"/>
</dbReference>
<dbReference type="InterPro" id="IPR005358">
    <property type="entry name" value="Puta_zinc/iron-chelating_dom"/>
</dbReference>
<dbReference type="InterPro" id="IPR008228">
    <property type="entry name" value="UCP006173"/>
</dbReference>
<dbReference type="NCBIfam" id="NF003498">
    <property type="entry name" value="PRK05170.1-1"/>
    <property type="match status" value="1"/>
</dbReference>
<dbReference type="NCBIfam" id="NF003501">
    <property type="entry name" value="PRK05170.1-5"/>
    <property type="match status" value="1"/>
</dbReference>
<dbReference type="NCBIfam" id="NF003503">
    <property type="entry name" value="PRK05170.2-1"/>
    <property type="match status" value="1"/>
</dbReference>
<dbReference type="NCBIfam" id="NF003507">
    <property type="entry name" value="PRK05170.2-5"/>
    <property type="match status" value="1"/>
</dbReference>
<dbReference type="PANTHER" id="PTHR37421">
    <property type="entry name" value="UPF0260 PROTEIN YCGN"/>
    <property type="match status" value="1"/>
</dbReference>
<dbReference type="PANTHER" id="PTHR37421:SF1">
    <property type="entry name" value="UPF0260 PROTEIN YCGN"/>
    <property type="match status" value="1"/>
</dbReference>
<dbReference type="Pfam" id="PF03692">
    <property type="entry name" value="CxxCxxCC"/>
    <property type="match status" value="1"/>
</dbReference>
<dbReference type="PIRSF" id="PIRSF006173">
    <property type="entry name" value="UCP006173"/>
    <property type="match status" value="1"/>
</dbReference>
<organism>
    <name type="scientific">Salmonella schwarzengrund (strain CVM19633)</name>
    <dbReference type="NCBI Taxonomy" id="439843"/>
    <lineage>
        <taxon>Bacteria</taxon>
        <taxon>Pseudomonadati</taxon>
        <taxon>Pseudomonadota</taxon>
        <taxon>Gammaproteobacteria</taxon>
        <taxon>Enterobacterales</taxon>
        <taxon>Enterobacteriaceae</taxon>
        <taxon>Salmonella</taxon>
    </lineage>
</organism>
<feature type="chain" id="PRO_1000131637" description="UPF0260 protein YcgN">
    <location>
        <begin position="1"/>
        <end position="153"/>
    </location>
</feature>
<proteinExistence type="inferred from homology"/>
<name>YCGN_SALSV</name>